<gene>
    <name type="ordered locus">Geob_0921</name>
</gene>
<evidence type="ECO:0000255" key="1">
    <source>
        <dbReference type="HAMAP-Rule" id="MF_00632"/>
    </source>
</evidence>
<reference key="1">
    <citation type="submission" date="2009-01" db="EMBL/GenBank/DDBJ databases">
        <title>Complete sequence of Geobacter sp. FRC-32.</title>
        <authorList>
            <consortium name="US DOE Joint Genome Institute"/>
            <person name="Lucas S."/>
            <person name="Copeland A."/>
            <person name="Lapidus A."/>
            <person name="Glavina del Rio T."/>
            <person name="Dalin E."/>
            <person name="Tice H."/>
            <person name="Bruce D."/>
            <person name="Goodwin L."/>
            <person name="Pitluck S."/>
            <person name="Saunders E."/>
            <person name="Brettin T."/>
            <person name="Detter J.C."/>
            <person name="Han C."/>
            <person name="Larimer F."/>
            <person name="Land M."/>
            <person name="Hauser L."/>
            <person name="Kyrpides N."/>
            <person name="Ovchinnikova G."/>
            <person name="Kostka J."/>
            <person name="Richardson P."/>
        </authorList>
    </citation>
    <scope>NUCLEOTIDE SEQUENCE [LARGE SCALE GENOMIC DNA]</scope>
    <source>
        <strain>DSM 22248 / JCM 15807 / FRC-32</strain>
    </source>
</reference>
<dbReference type="EMBL" id="CP001390">
    <property type="protein sequence ID" value="ACM19283.1"/>
    <property type="molecule type" value="Genomic_DNA"/>
</dbReference>
<dbReference type="RefSeq" id="WP_012646012.1">
    <property type="nucleotide sequence ID" value="NC_011979.1"/>
</dbReference>
<dbReference type="SMR" id="B9M1Y7"/>
<dbReference type="STRING" id="316067.Geob_0921"/>
<dbReference type="KEGG" id="geo:Geob_0921"/>
<dbReference type="eggNOG" id="COG1666">
    <property type="taxonomic scope" value="Bacteria"/>
</dbReference>
<dbReference type="HOGENOM" id="CLU_099839_1_0_7"/>
<dbReference type="OrthoDB" id="9801447at2"/>
<dbReference type="Proteomes" id="UP000007721">
    <property type="component" value="Chromosome"/>
</dbReference>
<dbReference type="GO" id="GO:0005829">
    <property type="term" value="C:cytosol"/>
    <property type="evidence" value="ECO:0007669"/>
    <property type="project" value="TreeGrafter"/>
</dbReference>
<dbReference type="GO" id="GO:0000166">
    <property type="term" value="F:nucleotide binding"/>
    <property type="evidence" value="ECO:0007669"/>
    <property type="project" value="TreeGrafter"/>
</dbReference>
<dbReference type="CDD" id="cd11740">
    <property type="entry name" value="YajQ_like"/>
    <property type="match status" value="1"/>
</dbReference>
<dbReference type="Gene3D" id="3.30.70.860">
    <property type="match status" value="1"/>
</dbReference>
<dbReference type="Gene3D" id="3.30.70.990">
    <property type="entry name" value="YajQ-like, domain 2"/>
    <property type="match status" value="1"/>
</dbReference>
<dbReference type="HAMAP" id="MF_00632">
    <property type="entry name" value="YajQ"/>
    <property type="match status" value="1"/>
</dbReference>
<dbReference type="InterPro" id="IPR007551">
    <property type="entry name" value="DUF520"/>
</dbReference>
<dbReference type="InterPro" id="IPR035571">
    <property type="entry name" value="UPF0234-like_C"/>
</dbReference>
<dbReference type="InterPro" id="IPR035570">
    <property type="entry name" value="UPF0234_N"/>
</dbReference>
<dbReference type="InterPro" id="IPR036183">
    <property type="entry name" value="YajQ-like_sf"/>
</dbReference>
<dbReference type="NCBIfam" id="NF003819">
    <property type="entry name" value="PRK05412.1"/>
    <property type="match status" value="1"/>
</dbReference>
<dbReference type="PANTHER" id="PTHR30476">
    <property type="entry name" value="UPF0234 PROTEIN YAJQ"/>
    <property type="match status" value="1"/>
</dbReference>
<dbReference type="PANTHER" id="PTHR30476:SF0">
    <property type="entry name" value="UPF0234 PROTEIN YAJQ"/>
    <property type="match status" value="1"/>
</dbReference>
<dbReference type="Pfam" id="PF04461">
    <property type="entry name" value="DUF520"/>
    <property type="match status" value="1"/>
</dbReference>
<dbReference type="SUPFAM" id="SSF89963">
    <property type="entry name" value="YajQ-like"/>
    <property type="match status" value="2"/>
</dbReference>
<feature type="chain" id="PRO_1000147306" description="Nucleotide-binding protein Geob_0921">
    <location>
        <begin position="1"/>
        <end position="161"/>
    </location>
</feature>
<keyword id="KW-0547">Nucleotide-binding</keyword>
<keyword id="KW-1185">Reference proteome</keyword>
<proteinExistence type="inferred from homology"/>
<comment type="function">
    <text evidence="1">Nucleotide-binding protein.</text>
</comment>
<comment type="similarity">
    <text evidence="1">Belongs to the YajQ family.</text>
</comment>
<protein>
    <recommendedName>
        <fullName evidence="1">Nucleotide-binding protein Geob_0921</fullName>
    </recommendedName>
</protein>
<organism>
    <name type="scientific">Geotalea daltonii (strain DSM 22248 / JCM 15807 / FRC-32)</name>
    <name type="common">Geobacter daltonii</name>
    <dbReference type="NCBI Taxonomy" id="316067"/>
    <lineage>
        <taxon>Bacteria</taxon>
        <taxon>Pseudomonadati</taxon>
        <taxon>Thermodesulfobacteriota</taxon>
        <taxon>Desulfuromonadia</taxon>
        <taxon>Geobacterales</taxon>
        <taxon>Geobacteraceae</taxon>
        <taxon>Geotalea</taxon>
    </lineage>
</organism>
<sequence length="161" mass="18168">MPSFDIVSKVDMQEVDNAVNQAVKEIAQRYDFKGSKSEVTLEKDAIKVLTEDDFRLKAIIDILQSKFIKRGISAKALQYGKVENASGSMVRQVIDVQQGVSKEKGKEINNVIKETKLKVQSQIQDDQVRVTGKNIDDLQQVIQLLKGKDLGLDLQFVNFRQ</sequence>
<name>Y921_GEODF</name>
<accession>B9M1Y7</accession>